<gene>
    <name evidence="1" type="primary">clpX</name>
    <name type="ordered locus">XC_3264</name>
</gene>
<protein>
    <recommendedName>
        <fullName evidence="1">ATP-dependent Clp protease ATP-binding subunit ClpX</fullName>
    </recommendedName>
</protein>
<feature type="chain" id="PRO_1000024701" description="ATP-dependent Clp protease ATP-binding subunit ClpX">
    <location>
        <begin position="1"/>
        <end position="428"/>
    </location>
</feature>
<feature type="domain" description="ClpX-type ZB" evidence="2">
    <location>
        <begin position="6"/>
        <end position="59"/>
    </location>
</feature>
<feature type="binding site" evidence="2">
    <location>
        <position position="18"/>
    </location>
    <ligand>
        <name>Zn(2+)</name>
        <dbReference type="ChEBI" id="CHEBI:29105"/>
    </ligand>
</feature>
<feature type="binding site" evidence="2">
    <location>
        <position position="21"/>
    </location>
    <ligand>
        <name>Zn(2+)</name>
        <dbReference type="ChEBI" id="CHEBI:29105"/>
    </ligand>
</feature>
<feature type="binding site" evidence="2">
    <location>
        <position position="40"/>
    </location>
    <ligand>
        <name>Zn(2+)</name>
        <dbReference type="ChEBI" id="CHEBI:29105"/>
    </ligand>
</feature>
<feature type="binding site" evidence="2">
    <location>
        <position position="43"/>
    </location>
    <ligand>
        <name>Zn(2+)</name>
        <dbReference type="ChEBI" id="CHEBI:29105"/>
    </ligand>
</feature>
<feature type="binding site" evidence="1">
    <location>
        <begin position="122"/>
        <end position="129"/>
    </location>
    <ligand>
        <name>ATP</name>
        <dbReference type="ChEBI" id="CHEBI:30616"/>
    </ligand>
</feature>
<comment type="function">
    <text evidence="1">ATP-dependent specificity component of the Clp protease. It directs the protease to specific substrates. Can perform chaperone functions in the absence of ClpP.</text>
</comment>
<comment type="subunit">
    <text evidence="1">Component of the ClpX-ClpP complex. Forms a hexameric ring that, in the presence of ATP, binds to fourteen ClpP subunits assembled into a disk-like structure with a central cavity, resembling the structure of eukaryotic proteasomes.</text>
</comment>
<comment type="similarity">
    <text evidence="1">Belongs to the ClpX chaperone family.</text>
</comment>
<organism>
    <name type="scientific">Xanthomonas campestris pv. campestris (strain 8004)</name>
    <dbReference type="NCBI Taxonomy" id="314565"/>
    <lineage>
        <taxon>Bacteria</taxon>
        <taxon>Pseudomonadati</taxon>
        <taxon>Pseudomonadota</taxon>
        <taxon>Gammaproteobacteria</taxon>
        <taxon>Lysobacterales</taxon>
        <taxon>Lysobacteraceae</taxon>
        <taxon>Xanthomonas</taxon>
    </lineage>
</organism>
<keyword id="KW-0067">ATP-binding</keyword>
<keyword id="KW-0143">Chaperone</keyword>
<keyword id="KW-0479">Metal-binding</keyword>
<keyword id="KW-0547">Nucleotide-binding</keyword>
<keyword id="KW-0862">Zinc</keyword>
<sequence length="428" mass="47136">MSEDRQGRSGDSNKILYCSFCGKSQHEVRKLIAGPSVFICDECVELCNDIIREELEEKAQSARSSLPKPREILEVLDQYVIGQLRAKRTLAVAVYNHYKRIESRSKNDEVELAKSNILLVGPTGSGKTLLAETLARLLNVPFTIADATTLTEAGYVGEDVENIIQKLLQKCDYDVEKAQQGIVYIDEIDKISRKSENPSITRDVSGEGVQQALLKLIEGTVASVPPQGGRKHPQQEFLQVDTKNILFICGGAFAGLDKVIQARSNDAGGIGFGAKVKSSERKQEVGKILAEVEPEDLIKFGLIPEFVGRLPVVATLEELDEPALIKILTEPKNAITKQFKKLFEMESVELEFRPDALSAIAKKALKRKTGARGLRTIVESVLLDTMYELPSQENVSKVVVDESVIEHKSEPYLIYQAQPAPAKAASGD</sequence>
<proteinExistence type="inferred from homology"/>
<accession>Q4URL5</accession>
<dbReference type="EMBL" id="CP000050">
    <property type="protein sequence ID" value="AAY50308.1"/>
    <property type="molecule type" value="Genomic_DNA"/>
</dbReference>
<dbReference type="RefSeq" id="WP_011036185.1">
    <property type="nucleotide sequence ID" value="NZ_CP155948.1"/>
</dbReference>
<dbReference type="SMR" id="Q4URL5"/>
<dbReference type="KEGG" id="xcb:XC_3264"/>
<dbReference type="HOGENOM" id="CLU_014218_8_2_6"/>
<dbReference type="Proteomes" id="UP000000420">
    <property type="component" value="Chromosome"/>
</dbReference>
<dbReference type="GO" id="GO:0009376">
    <property type="term" value="C:HslUV protease complex"/>
    <property type="evidence" value="ECO:0007669"/>
    <property type="project" value="TreeGrafter"/>
</dbReference>
<dbReference type="GO" id="GO:0005524">
    <property type="term" value="F:ATP binding"/>
    <property type="evidence" value="ECO:0007669"/>
    <property type="project" value="UniProtKB-UniRule"/>
</dbReference>
<dbReference type="GO" id="GO:0016887">
    <property type="term" value="F:ATP hydrolysis activity"/>
    <property type="evidence" value="ECO:0007669"/>
    <property type="project" value="InterPro"/>
</dbReference>
<dbReference type="GO" id="GO:0140662">
    <property type="term" value="F:ATP-dependent protein folding chaperone"/>
    <property type="evidence" value="ECO:0007669"/>
    <property type="project" value="InterPro"/>
</dbReference>
<dbReference type="GO" id="GO:0046983">
    <property type="term" value="F:protein dimerization activity"/>
    <property type="evidence" value="ECO:0007669"/>
    <property type="project" value="InterPro"/>
</dbReference>
<dbReference type="GO" id="GO:0051082">
    <property type="term" value="F:unfolded protein binding"/>
    <property type="evidence" value="ECO:0007669"/>
    <property type="project" value="UniProtKB-UniRule"/>
</dbReference>
<dbReference type="GO" id="GO:0008270">
    <property type="term" value="F:zinc ion binding"/>
    <property type="evidence" value="ECO:0007669"/>
    <property type="project" value="InterPro"/>
</dbReference>
<dbReference type="GO" id="GO:0051301">
    <property type="term" value="P:cell division"/>
    <property type="evidence" value="ECO:0007669"/>
    <property type="project" value="TreeGrafter"/>
</dbReference>
<dbReference type="GO" id="GO:0051603">
    <property type="term" value="P:proteolysis involved in protein catabolic process"/>
    <property type="evidence" value="ECO:0007669"/>
    <property type="project" value="TreeGrafter"/>
</dbReference>
<dbReference type="CDD" id="cd19497">
    <property type="entry name" value="RecA-like_ClpX"/>
    <property type="match status" value="1"/>
</dbReference>
<dbReference type="FunFam" id="1.10.8.60:FF:000002">
    <property type="entry name" value="ATP-dependent Clp protease ATP-binding subunit ClpX"/>
    <property type="match status" value="1"/>
</dbReference>
<dbReference type="FunFam" id="3.40.50.300:FF:000005">
    <property type="entry name" value="ATP-dependent Clp protease ATP-binding subunit ClpX"/>
    <property type="match status" value="1"/>
</dbReference>
<dbReference type="Gene3D" id="1.10.8.60">
    <property type="match status" value="1"/>
</dbReference>
<dbReference type="Gene3D" id="6.20.220.10">
    <property type="entry name" value="ClpX chaperone, C4-type zinc finger domain"/>
    <property type="match status" value="1"/>
</dbReference>
<dbReference type="Gene3D" id="3.40.50.300">
    <property type="entry name" value="P-loop containing nucleotide triphosphate hydrolases"/>
    <property type="match status" value="1"/>
</dbReference>
<dbReference type="HAMAP" id="MF_00175">
    <property type="entry name" value="ClpX"/>
    <property type="match status" value="1"/>
</dbReference>
<dbReference type="InterPro" id="IPR003593">
    <property type="entry name" value="AAA+_ATPase"/>
</dbReference>
<dbReference type="InterPro" id="IPR050052">
    <property type="entry name" value="ATP-dep_Clp_protease_ClpX"/>
</dbReference>
<dbReference type="InterPro" id="IPR003959">
    <property type="entry name" value="ATPase_AAA_core"/>
</dbReference>
<dbReference type="InterPro" id="IPR019489">
    <property type="entry name" value="Clp_ATPase_C"/>
</dbReference>
<dbReference type="InterPro" id="IPR004487">
    <property type="entry name" value="Clp_protease_ATP-bd_su_ClpX"/>
</dbReference>
<dbReference type="InterPro" id="IPR046425">
    <property type="entry name" value="ClpX_bact"/>
</dbReference>
<dbReference type="InterPro" id="IPR027417">
    <property type="entry name" value="P-loop_NTPase"/>
</dbReference>
<dbReference type="InterPro" id="IPR010603">
    <property type="entry name" value="Znf_CppX_C4"/>
</dbReference>
<dbReference type="InterPro" id="IPR038366">
    <property type="entry name" value="Znf_CppX_C4_sf"/>
</dbReference>
<dbReference type="NCBIfam" id="TIGR00382">
    <property type="entry name" value="clpX"/>
    <property type="match status" value="1"/>
</dbReference>
<dbReference type="NCBIfam" id="NF003745">
    <property type="entry name" value="PRK05342.1"/>
    <property type="match status" value="1"/>
</dbReference>
<dbReference type="PANTHER" id="PTHR48102:SF7">
    <property type="entry name" value="ATP-DEPENDENT CLP PROTEASE ATP-BINDING SUBUNIT CLPX-LIKE, MITOCHONDRIAL"/>
    <property type="match status" value="1"/>
</dbReference>
<dbReference type="PANTHER" id="PTHR48102">
    <property type="entry name" value="ATP-DEPENDENT CLP PROTEASE ATP-BINDING SUBUNIT CLPX-LIKE, MITOCHONDRIAL-RELATED"/>
    <property type="match status" value="1"/>
</dbReference>
<dbReference type="Pfam" id="PF07724">
    <property type="entry name" value="AAA_2"/>
    <property type="match status" value="1"/>
</dbReference>
<dbReference type="Pfam" id="PF10431">
    <property type="entry name" value="ClpB_D2-small"/>
    <property type="match status" value="1"/>
</dbReference>
<dbReference type="Pfam" id="PF06689">
    <property type="entry name" value="zf-C4_ClpX"/>
    <property type="match status" value="1"/>
</dbReference>
<dbReference type="SMART" id="SM00382">
    <property type="entry name" value="AAA"/>
    <property type="match status" value="1"/>
</dbReference>
<dbReference type="SMART" id="SM01086">
    <property type="entry name" value="ClpB_D2-small"/>
    <property type="match status" value="1"/>
</dbReference>
<dbReference type="SMART" id="SM00994">
    <property type="entry name" value="zf-C4_ClpX"/>
    <property type="match status" value="1"/>
</dbReference>
<dbReference type="SUPFAM" id="SSF57716">
    <property type="entry name" value="Glucocorticoid receptor-like (DNA-binding domain)"/>
    <property type="match status" value="1"/>
</dbReference>
<dbReference type="SUPFAM" id="SSF52540">
    <property type="entry name" value="P-loop containing nucleoside triphosphate hydrolases"/>
    <property type="match status" value="1"/>
</dbReference>
<dbReference type="PROSITE" id="PS51902">
    <property type="entry name" value="CLPX_ZB"/>
    <property type="match status" value="1"/>
</dbReference>
<evidence type="ECO:0000255" key="1">
    <source>
        <dbReference type="HAMAP-Rule" id="MF_00175"/>
    </source>
</evidence>
<evidence type="ECO:0000255" key="2">
    <source>
        <dbReference type="PROSITE-ProRule" id="PRU01250"/>
    </source>
</evidence>
<reference key="1">
    <citation type="journal article" date="2005" name="Genome Res.">
        <title>Comparative and functional genomic analyses of the pathogenicity of phytopathogen Xanthomonas campestris pv. campestris.</title>
        <authorList>
            <person name="Qian W."/>
            <person name="Jia Y."/>
            <person name="Ren S.-X."/>
            <person name="He Y.-Q."/>
            <person name="Feng J.-X."/>
            <person name="Lu L.-F."/>
            <person name="Sun Q."/>
            <person name="Ying G."/>
            <person name="Tang D.-J."/>
            <person name="Tang H."/>
            <person name="Wu W."/>
            <person name="Hao P."/>
            <person name="Wang L."/>
            <person name="Jiang B.-L."/>
            <person name="Zeng S."/>
            <person name="Gu W.-Y."/>
            <person name="Lu G."/>
            <person name="Rong L."/>
            <person name="Tian Y."/>
            <person name="Yao Z."/>
            <person name="Fu G."/>
            <person name="Chen B."/>
            <person name="Fang R."/>
            <person name="Qiang B."/>
            <person name="Chen Z."/>
            <person name="Zhao G.-P."/>
            <person name="Tang J.-L."/>
            <person name="He C."/>
        </authorList>
    </citation>
    <scope>NUCLEOTIDE SEQUENCE [LARGE SCALE GENOMIC DNA]</scope>
    <source>
        <strain>8004</strain>
    </source>
</reference>
<name>CLPX_XANC8</name>